<gene>
    <name type="primary">FCY21</name>
    <name type="synonym">FCYY</name>
    <name type="ordered locus">YER060W</name>
</gene>
<proteinExistence type="evidence at protein level"/>
<reference key="1">
    <citation type="submission" date="1996-05" db="EMBL/GenBank/DDBJ databases">
        <authorList>
            <person name="Straub M.L."/>
            <person name="Souciet J.-L."/>
            <person name="Potier S."/>
            <person name="de Montigny J."/>
        </authorList>
    </citation>
    <scope>NUCLEOTIDE SEQUENCE [GENOMIC DNA]</scope>
    <source>
        <strain>ATCC 28383 / FL100 / VTT C-80102</strain>
    </source>
</reference>
<reference key="2">
    <citation type="journal article" date="1997" name="Nature">
        <title>The nucleotide sequence of Saccharomyces cerevisiae chromosome V.</title>
        <authorList>
            <person name="Dietrich F.S."/>
            <person name="Mulligan J.T."/>
            <person name="Hennessy K.M."/>
            <person name="Yelton M.A."/>
            <person name="Allen E."/>
            <person name="Araujo R."/>
            <person name="Aviles E."/>
            <person name="Berno A."/>
            <person name="Brennan T."/>
            <person name="Carpenter J."/>
            <person name="Chen E."/>
            <person name="Cherry J.M."/>
            <person name="Chung E."/>
            <person name="Duncan M."/>
            <person name="Guzman E."/>
            <person name="Hartzell G."/>
            <person name="Hunicke-Smith S."/>
            <person name="Hyman R.W."/>
            <person name="Kayser A."/>
            <person name="Komp C."/>
            <person name="Lashkari D."/>
            <person name="Lew H."/>
            <person name="Lin D."/>
            <person name="Mosedale D."/>
            <person name="Nakahara K."/>
            <person name="Namath A."/>
            <person name="Norgren R."/>
            <person name="Oefner P."/>
            <person name="Oh C."/>
            <person name="Petel F.X."/>
            <person name="Roberts D."/>
            <person name="Sehl P."/>
            <person name="Schramm S."/>
            <person name="Shogren T."/>
            <person name="Smith V."/>
            <person name="Taylor P."/>
            <person name="Wei Y."/>
            <person name="Botstein D."/>
            <person name="Davis R.W."/>
        </authorList>
    </citation>
    <scope>NUCLEOTIDE SEQUENCE [LARGE SCALE GENOMIC DNA]</scope>
    <source>
        <strain>ATCC 204508 / S288c</strain>
    </source>
</reference>
<reference key="3">
    <citation type="journal article" date="2014" name="G3 (Bethesda)">
        <title>The reference genome sequence of Saccharomyces cerevisiae: Then and now.</title>
        <authorList>
            <person name="Engel S.R."/>
            <person name="Dietrich F.S."/>
            <person name="Fisk D.G."/>
            <person name="Binkley G."/>
            <person name="Balakrishnan R."/>
            <person name="Costanzo M.C."/>
            <person name="Dwight S.S."/>
            <person name="Hitz B.C."/>
            <person name="Karra K."/>
            <person name="Nash R.S."/>
            <person name="Weng S."/>
            <person name="Wong E.D."/>
            <person name="Lloyd P."/>
            <person name="Skrzypek M.S."/>
            <person name="Miyasato S.R."/>
            <person name="Simison M."/>
            <person name="Cherry J.M."/>
        </authorList>
    </citation>
    <scope>GENOME REANNOTATION</scope>
    <source>
        <strain>ATCC 204508 / S288c</strain>
    </source>
</reference>
<reference key="4">
    <citation type="journal article" date="2006" name="Proc. Natl. Acad. Sci. U.S.A.">
        <title>A global topology map of the Saccharomyces cerevisiae membrane proteome.</title>
        <authorList>
            <person name="Kim H."/>
            <person name="Melen K."/>
            <person name="Oesterberg M."/>
            <person name="von Heijne G."/>
        </authorList>
    </citation>
    <scope>TOPOLOGY [LARGE SCALE ANALYSIS]</scope>
    <source>
        <strain>ATCC 208353 / W303-1A</strain>
    </source>
</reference>
<reference key="5">
    <citation type="journal article" date="2009" name="Science">
        <title>Global analysis of Cdk1 substrate phosphorylation sites provides insights into evolution.</title>
        <authorList>
            <person name="Holt L.J."/>
            <person name="Tuch B.B."/>
            <person name="Villen J."/>
            <person name="Johnson A.D."/>
            <person name="Gygi S.P."/>
            <person name="Morgan D.O."/>
        </authorList>
    </citation>
    <scope>PHOSPHORYLATION [LARGE SCALE ANALYSIS] AT SER-43 AND THR-46</scope>
    <scope>IDENTIFICATION BY MASS SPECTROMETRY [LARGE SCALE ANALYSIS]</scope>
</reference>
<keyword id="KW-0472">Membrane</keyword>
<keyword id="KW-0597">Phosphoprotein</keyword>
<keyword id="KW-1185">Reference proteome</keyword>
<keyword id="KW-0812">Transmembrane</keyword>
<keyword id="KW-1133">Transmembrane helix</keyword>
<keyword id="KW-0813">Transport</keyword>
<protein>
    <recommendedName>
        <fullName>Purine-cytosine permease FCY21</fullName>
        <shortName>PCP FCY21</shortName>
    </recommendedName>
    <alternativeName>
        <fullName>Cytosine/purine transport protein FCY21</fullName>
    </alternativeName>
    <alternativeName>
        <fullName>Fluorocytosine resistance protein 21</fullName>
    </alternativeName>
</protein>
<name>FCY21_YEAST</name>
<dbReference type="EMBL" id="X97346">
    <property type="protein sequence ID" value="CAA66032.1"/>
    <property type="molecule type" value="Genomic_DNA"/>
</dbReference>
<dbReference type="EMBL" id="U18813">
    <property type="protein sequence ID" value="AAB64596.1"/>
    <property type="molecule type" value="Genomic_DNA"/>
</dbReference>
<dbReference type="EMBL" id="BK006939">
    <property type="protein sequence ID" value="DAA07718.1"/>
    <property type="molecule type" value="Genomic_DNA"/>
</dbReference>
<dbReference type="PIR" id="S50563">
    <property type="entry name" value="S50563"/>
</dbReference>
<dbReference type="RefSeq" id="NP_010981.3">
    <property type="nucleotide sequence ID" value="NM_001178951.3"/>
</dbReference>
<dbReference type="SMR" id="P40039"/>
<dbReference type="BioGRID" id="36801">
    <property type="interactions" value="50"/>
</dbReference>
<dbReference type="FunCoup" id="P40039">
    <property type="interactions" value="57"/>
</dbReference>
<dbReference type="MINT" id="P40039"/>
<dbReference type="STRING" id="4932.YER060W"/>
<dbReference type="GlyGen" id="P40039">
    <property type="glycosylation" value="1 site"/>
</dbReference>
<dbReference type="iPTMnet" id="P40039"/>
<dbReference type="PaxDb" id="4932-YER060W"/>
<dbReference type="PeptideAtlas" id="P40039"/>
<dbReference type="EnsemblFungi" id="YER060W_mRNA">
    <property type="protein sequence ID" value="YER060W"/>
    <property type="gene ID" value="YER060W"/>
</dbReference>
<dbReference type="GeneID" id="856788"/>
<dbReference type="KEGG" id="sce:YER060W"/>
<dbReference type="AGR" id="SGD:S000000862"/>
<dbReference type="SGD" id="S000000862">
    <property type="gene designation" value="FCY21"/>
</dbReference>
<dbReference type="VEuPathDB" id="FungiDB:YER060W"/>
<dbReference type="eggNOG" id="ENOG502QQ8Y">
    <property type="taxonomic scope" value="Eukaryota"/>
</dbReference>
<dbReference type="GeneTree" id="ENSGT00940000176331"/>
<dbReference type="HOGENOM" id="CLU_026016_2_2_1"/>
<dbReference type="InParanoid" id="P40039"/>
<dbReference type="OMA" id="TIACVGW"/>
<dbReference type="OrthoDB" id="2116389at2759"/>
<dbReference type="BioCyc" id="YEAST:G3O-30237-MONOMER"/>
<dbReference type="BioGRID-ORCS" id="856788">
    <property type="hits" value="1 hit in 10 CRISPR screens"/>
</dbReference>
<dbReference type="PRO" id="PR:P40039"/>
<dbReference type="Proteomes" id="UP000002311">
    <property type="component" value="Chromosome V"/>
</dbReference>
<dbReference type="RNAct" id="P40039">
    <property type="molecule type" value="protein"/>
</dbReference>
<dbReference type="GO" id="GO:0005886">
    <property type="term" value="C:plasma membrane"/>
    <property type="evidence" value="ECO:0000247"/>
    <property type="project" value="SGD"/>
</dbReference>
<dbReference type="GO" id="GO:0015205">
    <property type="term" value="F:nucleobase transmembrane transporter activity"/>
    <property type="evidence" value="ECO:0000315"/>
    <property type="project" value="SGD"/>
</dbReference>
<dbReference type="GO" id="GO:0015856">
    <property type="term" value="P:cytosine transport"/>
    <property type="evidence" value="ECO:0000315"/>
    <property type="project" value="SGD"/>
</dbReference>
<dbReference type="GO" id="GO:0072530">
    <property type="term" value="P:purine-containing compound transmembrane transport"/>
    <property type="evidence" value="ECO:0000247"/>
    <property type="project" value="SGD"/>
</dbReference>
<dbReference type="CDD" id="cd11484">
    <property type="entry name" value="SLC-NCS1sbd_CobB-like"/>
    <property type="match status" value="1"/>
</dbReference>
<dbReference type="FunFam" id="1.10.4160.10:FF:000002">
    <property type="entry name" value="Purine-cytosine permease fcyB"/>
    <property type="match status" value="1"/>
</dbReference>
<dbReference type="Gene3D" id="1.10.4160.10">
    <property type="entry name" value="Hydantoin permease"/>
    <property type="match status" value="1"/>
</dbReference>
<dbReference type="InterPro" id="IPR012681">
    <property type="entry name" value="NCS1"/>
</dbReference>
<dbReference type="InterPro" id="IPR001248">
    <property type="entry name" value="Pur-cyt_permease"/>
</dbReference>
<dbReference type="InterPro" id="IPR026030">
    <property type="entry name" value="Pur-cyt_permease_Fcy2/21/22"/>
</dbReference>
<dbReference type="NCBIfam" id="TIGR00800">
    <property type="entry name" value="ncs1"/>
    <property type="match status" value="1"/>
</dbReference>
<dbReference type="PANTHER" id="PTHR31806">
    <property type="entry name" value="PURINE-CYTOSINE PERMEASE FCY2-RELATED"/>
    <property type="match status" value="1"/>
</dbReference>
<dbReference type="PANTHER" id="PTHR31806:SF1">
    <property type="entry name" value="PURINE-CYTOSINE PERMEASE FCY2-RELATED"/>
    <property type="match status" value="1"/>
</dbReference>
<dbReference type="Pfam" id="PF02133">
    <property type="entry name" value="Transp_cyt_pur"/>
    <property type="match status" value="1"/>
</dbReference>
<dbReference type="PIRSF" id="PIRSF002744">
    <property type="entry name" value="Pur-cyt_permease"/>
    <property type="match status" value="1"/>
</dbReference>
<evidence type="ECO:0000250" key="1"/>
<evidence type="ECO:0000255" key="2"/>
<evidence type="ECO:0000305" key="3"/>
<evidence type="ECO:0007744" key="4">
    <source>
    </source>
</evidence>
<accession>P40039</accession>
<accession>D3DLW4</accession>
<feature type="chain" id="PRO_0000197921" description="Purine-cytosine permease FCY21">
    <location>
        <begin position="1"/>
        <end position="528"/>
    </location>
</feature>
<feature type="topological domain" description="Cytoplasmic" evidence="2">
    <location>
        <begin position="1"/>
        <end position="90"/>
    </location>
</feature>
<feature type="transmembrane region" description="Helical" evidence="2">
    <location>
        <begin position="91"/>
        <end position="111"/>
    </location>
</feature>
<feature type="topological domain" description="Extracellular" evidence="2">
    <location>
        <begin position="112"/>
        <end position="118"/>
    </location>
</feature>
<feature type="transmembrane region" description="Helical" evidence="2">
    <location>
        <begin position="119"/>
        <end position="139"/>
    </location>
</feature>
<feature type="topological domain" description="Cytoplasmic" evidence="2">
    <location>
        <begin position="140"/>
        <end position="161"/>
    </location>
</feature>
<feature type="transmembrane region" description="Helical" evidence="2">
    <location>
        <begin position="162"/>
        <end position="182"/>
    </location>
</feature>
<feature type="topological domain" description="Extracellular" evidence="2">
    <location>
        <begin position="183"/>
        <end position="198"/>
    </location>
</feature>
<feature type="transmembrane region" description="Helical" evidence="2">
    <location>
        <begin position="199"/>
        <end position="219"/>
    </location>
</feature>
<feature type="topological domain" description="Cytoplasmic" evidence="2">
    <location>
        <begin position="220"/>
        <end position="221"/>
    </location>
</feature>
<feature type="transmembrane region" description="Helical" evidence="2">
    <location>
        <begin position="222"/>
        <end position="242"/>
    </location>
</feature>
<feature type="topological domain" description="Extracellular" evidence="2">
    <location>
        <begin position="243"/>
        <end position="260"/>
    </location>
</feature>
<feature type="transmembrane region" description="Helical" evidence="2">
    <location>
        <begin position="261"/>
        <end position="281"/>
    </location>
</feature>
<feature type="topological domain" description="Cytoplasmic" evidence="2">
    <location>
        <begin position="282"/>
        <end position="295"/>
    </location>
</feature>
<feature type="transmembrane region" description="Helical" evidence="2">
    <location>
        <begin position="296"/>
        <end position="316"/>
    </location>
</feature>
<feature type="topological domain" description="Extracellular" evidence="2">
    <location>
        <begin position="317"/>
        <end position="340"/>
    </location>
</feature>
<feature type="transmembrane region" description="Helical" evidence="2">
    <location>
        <begin position="341"/>
        <end position="361"/>
    </location>
</feature>
<feature type="topological domain" description="Cytoplasmic" evidence="2">
    <location>
        <begin position="362"/>
        <end position="393"/>
    </location>
</feature>
<feature type="transmembrane region" description="Helical" evidence="2">
    <location>
        <begin position="394"/>
        <end position="414"/>
    </location>
</feature>
<feature type="topological domain" description="Extracellular" evidence="2">
    <location>
        <begin position="415"/>
        <end position="416"/>
    </location>
</feature>
<feature type="transmembrane region" description="Helical" evidence="2">
    <location>
        <begin position="417"/>
        <end position="437"/>
    </location>
</feature>
<feature type="topological domain" description="Cytoplasmic" evidence="2">
    <location>
        <begin position="438"/>
        <end position="460"/>
    </location>
</feature>
<feature type="transmembrane region" description="Helical" evidence="2">
    <location>
        <begin position="461"/>
        <end position="481"/>
    </location>
</feature>
<feature type="topological domain" description="Extracellular" evidence="2">
    <location>
        <begin position="482"/>
        <end position="493"/>
    </location>
</feature>
<feature type="transmembrane region" description="Helical" evidence="2">
    <location>
        <begin position="494"/>
        <end position="514"/>
    </location>
</feature>
<feature type="topological domain" description="Cytoplasmic" evidence="2">
    <location>
        <begin position="515"/>
        <end position="528"/>
    </location>
</feature>
<feature type="modified residue" description="Phosphoserine" evidence="4">
    <location>
        <position position="43"/>
    </location>
</feature>
<feature type="modified residue" description="Phosphothreonine" evidence="4">
    <location>
        <position position="46"/>
    </location>
</feature>
<sequence>MPQTHEMSLNGTQYLKYELKDLESRAHDAKTPSTNEFYDDVESHGTEELVEAKLSFLNRIAAGLSAETKGIEPITEDEKTDDSILNAASMWFSANMVLPAYAIGALGPMVFDLNFGQSVFVIIFFNLLGLVSVAFFSVFGAELGLRQMILSRYLVGNIAARIFSFINFIACIGWGIVNTVASSQVLNMVNPGHQCPLWAGCIVIIGATVIVTFFGYGVIHAYEKWAWVPNFAVFLVIIARLARSKKFVLGEWTSGPTTAGNVLSFGSTVYGFAAGWTTYAADYTVYMPRKTNKYKIFFSLVVGLATPLYFTMILGAAVAMAAIGDPAWKTYYDENSIGGLTFAVLVPNSVHGFGQFCCVLLSLSTIANNVPNMYTIALSVQATWEPLAKVPRVIWTLLGNAAALGIAIPACYYFSTFMNYFMDSIGYYLAIYIAIACSEHFIYRRSFSAYNVDDWDSWERLPIGIAGTAALIVGAFGVALGMCQTYWVGEISRLIGDYGGDIGFELGLSWAFIVYNIARPFELKYFGR</sequence>
<comment type="function">
    <text evidence="1">Probable purine-cytosine permease.</text>
</comment>
<comment type="subcellular location">
    <subcellularLocation>
        <location>Membrane</location>
        <topology>Multi-pass membrane protein</topology>
    </subcellularLocation>
</comment>
<comment type="similarity">
    <text evidence="3">Belongs to the purine-cytosine permease (2.A.39) family.</text>
</comment>
<organism>
    <name type="scientific">Saccharomyces cerevisiae (strain ATCC 204508 / S288c)</name>
    <name type="common">Baker's yeast</name>
    <dbReference type="NCBI Taxonomy" id="559292"/>
    <lineage>
        <taxon>Eukaryota</taxon>
        <taxon>Fungi</taxon>
        <taxon>Dikarya</taxon>
        <taxon>Ascomycota</taxon>
        <taxon>Saccharomycotina</taxon>
        <taxon>Saccharomycetes</taxon>
        <taxon>Saccharomycetales</taxon>
        <taxon>Saccharomycetaceae</taxon>
        <taxon>Saccharomyces</taxon>
    </lineage>
</organism>